<accession>A0PXX6</accession>
<evidence type="ECO:0000255" key="1">
    <source>
        <dbReference type="HAMAP-Rule" id="MF_01368"/>
    </source>
</evidence>
<evidence type="ECO:0000305" key="2"/>
<dbReference type="EMBL" id="CP000382">
    <property type="protein sequence ID" value="ABK61345.1"/>
    <property type="molecule type" value="Genomic_DNA"/>
</dbReference>
<dbReference type="RefSeq" id="WP_003367772.1">
    <property type="nucleotide sequence ID" value="NC_008593.1"/>
</dbReference>
<dbReference type="SMR" id="A0PXX6"/>
<dbReference type="STRING" id="386415.NT01CX_1145"/>
<dbReference type="KEGG" id="cno:NT01CX_1145"/>
<dbReference type="eggNOG" id="COG0203">
    <property type="taxonomic scope" value="Bacteria"/>
</dbReference>
<dbReference type="HOGENOM" id="CLU_074407_2_2_9"/>
<dbReference type="Proteomes" id="UP000008220">
    <property type="component" value="Chromosome"/>
</dbReference>
<dbReference type="GO" id="GO:0022625">
    <property type="term" value="C:cytosolic large ribosomal subunit"/>
    <property type="evidence" value="ECO:0007669"/>
    <property type="project" value="TreeGrafter"/>
</dbReference>
<dbReference type="GO" id="GO:0003735">
    <property type="term" value="F:structural constituent of ribosome"/>
    <property type="evidence" value="ECO:0007669"/>
    <property type="project" value="InterPro"/>
</dbReference>
<dbReference type="GO" id="GO:0006412">
    <property type="term" value="P:translation"/>
    <property type="evidence" value="ECO:0007669"/>
    <property type="project" value="UniProtKB-UniRule"/>
</dbReference>
<dbReference type="Gene3D" id="3.90.1030.10">
    <property type="entry name" value="Ribosomal protein L17"/>
    <property type="match status" value="1"/>
</dbReference>
<dbReference type="HAMAP" id="MF_01368">
    <property type="entry name" value="Ribosomal_bL17"/>
    <property type="match status" value="1"/>
</dbReference>
<dbReference type="InterPro" id="IPR000456">
    <property type="entry name" value="Ribosomal_bL17"/>
</dbReference>
<dbReference type="InterPro" id="IPR036373">
    <property type="entry name" value="Ribosomal_bL17_sf"/>
</dbReference>
<dbReference type="NCBIfam" id="TIGR00059">
    <property type="entry name" value="L17"/>
    <property type="match status" value="1"/>
</dbReference>
<dbReference type="PANTHER" id="PTHR14413:SF16">
    <property type="entry name" value="LARGE RIBOSOMAL SUBUNIT PROTEIN BL17M"/>
    <property type="match status" value="1"/>
</dbReference>
<dbReference type="PANTHER" id="PTHR14413">
    <property type="entry name" value="RIBOSOMAL PROTEIN L17"/>
    <property type="match status" value="1"/>
</dbReference>
<dbReference type="Pfam" id="PF01196">
    <property type="entry name" value="Ribosomal_L17"/>
    <property type="match status" value="1"/>
</dbReference>
<dbReference type="SUPFAM" id="SSF64263">
    <property type="entry name" value="Prokaryotic ribosomal protein L17"/>
    <property type="match status" value="1"/>
</dbReference>
<keyword id="KW-1185">Reference proteome</keyword>
<keyword id="KW-0687">Ribonucleoprotein</keyword>
<keyword id="KW-0689">Ribosomal protein</keyword>
<comment type="subunit">
    <text evidence="1">Part of the 50S ribosomal subunit. Contacts protein L32.</text>
</comment>
<comment type="similarity">
    <text evidence="1">Belongs to the bacterial ribosomal protein bL17 family.</text>
</comment>
<name>RL17_CLONN</name>
<feature type="chain" id="PRO_1000055805" description="Large ribosomal subunit protein bL17">
    <location>
        <begin position="1"/>
        <end position="113"/>
    </location>
</feature>
<sequence length="113" mass="12883">MAQQRKLGLPTDHRRAMLRNLVTSFLKNGKVETTITRAKEARNMAEKMITLAKRGDLHARRQVLAYVTEKEVVDHLFAEIAPKYADRNGGYTRMYKMGPRRGDGAEVVILELV</sequence>
<proteinExistence type="inferred from homology"/>
<organism>
    <name type="scientific">Clostridium novyi (strain NT)</name>
    <dbReference type="NCBI Taxonomy" id="386415"/>
    <lineage>
        <taxon>Bacteria</taxon>
        <taxon>Bacillati</taxon>
        <taxon>Bacillota</taxon>
        <taxon>Clostridia</taxon>
        <taxon>Eubacteriales</taxon>
        <taxon>Clostridiaceae</taxon>
        <taxon>Clostridium</taxon>
    </lineage>
</organism>
<reference key="1">
    <citation type="journal article" date="2006" name="Nat. Biotechnol.">
        <title>The genome and transcriptomes of the anti-tumor agent Clostridium novyi-NT.</title>
        <authorList>
            <person name="Bettegowda C."/>
            <person name="Huang X."/>
            <person name="Lin J."/>
            <person name="Cheong I."/>
            <person name="Kohli M."/>
            <person name="Szabo S.A."/>
            <person name="Zhang X."/>
            <person name="Diaz L.A. Jr."/>
            <person name="Velculescu V.E."/>
            <person name="Parmigiani G."/>
            <person name="Kinzler K.W."/>
            <person name="Vogelstein B."/>
            <person name="Zhou S."/>
        </authorList>
    </citation>
    <scope>NUCLEOTIDE SEQUENCE [LARGE SCALE GENOMIC DNA]</scope>
    <source>
        <strain>NT</strain>
    </source>
</reference>
<gene>
    <name evidence="1" type="primary">rplQ</name>
    <name type="ordered locus">NT01CX_1145</name>
</gene>
<protein>
    <recommendedName>
        <fullName evidence="1">Large ribosomal subunit protein bL17</fullName>
    </recommendedName>
    <alternativeName>
        <fullName evidence="2">50S ribosomal protein L17</fullName>
    </alternativeName>
</protein>